<protein>
    <recommendedName>
        <fullName>Vasculin</fullName>
    </recommendedName>
    <alternativeName>
        <fullName>GC-rich promoter-binding protein 1</fullName>
    </alternativeName>
</protein>
<gene>
    <name type="primary">gpbp1</name>
</gene>
<sequence>MAQHDFAPAWLNFPTPPPSTKPFLYAEKRSESLGRSDCAFNVNRQRHNSSEAFDSSFGGNLKKREKNVWRPQSRSAAEPTWQREASLHLYSSNLQRVNSQLRSERNTSEFDLTRSLDREDCKTFEAEDFSFLYPEHERGKKLFTARLWEYPMNAGSTSPQMLGIKKGLMDDFSLSGYSIGVGNQSLPDKHWAGIKKEECKSLSKDNNIGSFYQDCPPENYIPNTSLHAELLSVDPCSLEEEEDTHLNNRNDSCPEMDINLNFDENENSEDNVNTLISGQISPAYAQDGVLSSSLEAEFKLLREMGWQENDESCAPLTEDEMREFQAISEQLQKNGLRKHVFLRDALAFDLFQDAVQKEDSETSSSDTSDDE</sequence>
<dbReference type="EMBL" id="BC077810">
    <property type="protein sequence ID" value="AAH77810.1"/>
    <property type="molecule type" value="mRNA"/>
</dbReference>
<dbReference type="RefSeq" id="NP_001086947.1">
    <property type="nucleotide sequence ID" value="NM_001093478.1"/>
</dbReference>
<dbReference type="DNASU" id="446782"/>
<dbReference type="GeneID" id="446782"/>
<dbReference type="KEGG" id="xla:446782"/>
<dbReference type="AGR" id="Xenbase:XB-GENE-6255346"/>
<dbReference type="CTD" id="446782"/>
<dbReference type="Xenbase" id="XB-GENE-6255346">
    <property type="gene designation" value="gpbp1.L"/>
</dbReference>
<dbReference type="OrthoDB" id="8741226at2759"/>
<dbReference type="Proteomes" id="UP000186698">
    <property type="component" value="Chromosome 1L"/>
</dbReference>
<dbReference type="Bgee" id="446782">
    <property type="expression patterns" value="Expressed in testis and 19 other cell types or tissues"/>
</dbReference>
<dbReference type="GO" id="GO:0005634">
    <property type="term" value="C:nucleus"/>
    <property type="evidence" value="ECO:0000318"/>
    <property type="project" value="GO_Central"/>
</dbReference>
<dbReference type="GO" id="GO:0003677">
    <property type="term" value="F:DNA binding"/>
    <property type="evidence" value="ECO:0007669"/>
    <property type="project" value="UniProtKB-KW"/>
</dbReference>
<dbReference type="GO" id="GO:0003723">
    <property type="term" value="F:RNA binding"/>
    <property type="evidence" value="ECO:0007669"/>
    <property type="project" value="InterPro"/>
</dbReference>
<dbReference type="GO" id="GO:0006351">
    <property type="term" value="P:DNA-templated transcription"/>
    <property type="evidence" value="ECO:0007669"/>
    <property type="project" value="InterPro"/>
</dbReference>
<dbReference type="GO" id="GO:0045893">
    <property type="term" value="P:positive regulation of DNA-templated transcription"/>
    <property type="evidence" value="ECO:0007669"/>
    <property type="project" value="InterPro"/>
</dbReference>
<dbReference type="GO" id="GO:0006355">
    <property type="term" value="P:regulation of DNA-templated transcription"/>
    <property type="evidence" value="ECO:0000318"/>
    <property type="project" value="GO_Central"/>
</dbReference>
<dbReference type="InterPro" id="IPR028128">
    <property type="entry name" value="Vasculin_fam"/>
</dbReference>
<dbReference type="PANTHER" id="PTHR14339">
    <property type="entry name" value="VASCULIN"/>
    <property type="match status" value="1"/>
</dbReference>
<dbReference type="PANTHER" id="PTHR14339:SF11">
    <property type="entry name" value="VASCULIN"/>
    <property type="match status" value="1"/>
</dbReference>
<dbReference type="Pfam" id="PF15337">
    <property type="entry name" value="Vasculin"/>
    <property type="match status" value="1"/>
</dbReference>
<name>GPBP1_XENLA</name>
<reference key="1">
    <citation type="submission" date="2004-07" db="EMBL/GenBank/DDBJ databases">
        <authorList>
            <consortium name="NIH - Xenopus Gene Collection (XGC) project"/>
        </authorList>
    </citation>
    <scope>NUCLEOTIDE SEQUENCE [LARGE SCALE MRNA]</scope>
    <source>
        <tissue>Embryo</tissue>
    </source>
</reference>
<organism>
    <name type="scientific">Xenopus laevis</name>
    <name type="common">African clawed frog</name>
    <dbReference type="NCBI Taxonomy" id="8355"/>
    <lineage>
        <taxon>Eukaryota</taxon>
        <taxon>Metazoa</taxon>
        <taxon>Chordata</taxon>
        <taxon>Craniata</taxon>
        <taxon>Vertebrata</taxon>
        <taxon>Euteleostomi</taxon>
        <taxon>Amphibia</taxon>
        <taxon>Batrachia</taxon>
        <taxon>Anura</taxon>
        <taxon>Pipoidea</taxon>
        <taxon>Pipidae</taxon>
        <taxon>Xenopodinae</taxon>
        <taxon>Xenopus</taxon>
        <taxon>Xenopus</taxon>
    </lineage>
</organism>
<proteinExistence type="evidence at transcript level"/>
<comment type="function">
    <text evidence="1">Functions as a GC-rich promoter-specific transactivating transcription factor.</text>
</comment>
<comment type="subcellular location">
    <subcellularLocation>
        <location evidence="1">Nucleus</location>
    </subcellularLocation>
</comment>
<comment type="similarity">
    <text evidence="2">Belongs to the vasculin family.</text>
</comment>
<evidence type="ECO:0000250" key="1">
    <source>
        <dbReference type="UniProtKB" id="Q6NXH3"/>
    </source>
</evidence>
<evidence type="ECO:0000305" key="2"/>
<feature type="chain" id="PRO_0000324113" description="Vasculin">
    <location>
        <begin position="1"/>
        <end position="371"/>
    </location>
</feature>
<keyword id="KW-0010">Activator</keyword>
<keyword id="KW-0238">DNA-binding</keyword>
<keyword id="KW-0539">Nucleus</keyword>
<keyword id="KW-1185">Reference proteome</keyword>
<keyword id="KW-0804">Transcription</keyword>
<keyword id="KW-0805">Transcription regulation</keyword>
<accession>Q6DD19</accession>